<reference key="1">
    <citation type="submission" date="2003-10" db="EMBL/GenBank/DDBJ databases">
        <title>61 primate SINEs and the evolution of strepsirrhines.</title>
        <authorList>
            <person name="Roos C."/>
            <person name="Schmitz J."/>
            <person name="Zischler H."/>
        </authorList>
    </citation>
    <scope>NUCLEOTIDE SEQUENCE [GENOMIC DNA]</scope>
</reference>
<comment type="function">
    <text evidence="2">Component of the ubiquinol-cytochrome c reductase complex (complex III or cytochrome b-c1 complex) that is part of the mitochondrial respiratory chain. The b-c1 complex mediates electron transfer from ubiquinol to cytochrome c. Contributes to the generation of a proton gradient across the mitochondrial membrane that is then used for ATP synthesis.</text>
</comment>
<comment type="cofactor">
    <cofactor evidence="2">
        <name>heme b</name>
        <dbReference type="ChEBI" id="CHEBI:60344"/>
    </cofactor>
    <text evidence="2">Binds 2 heme b groups non-covalently.</text>
</comment>
<comment type="subunit">
    <text evidence="2">The cytochrome bc1 complex contains 11 subunits: 3 respiratory subunits (MT-CYB, CYC1 and UQCRFS1), 2 core proteins (UQCRC1 and UQCRC2) and 6 low-molecular weight proteins (UQCRH/QCR6, UQCRB/QCR7, UQCRQ/QCR8, UQCR10/QCR9, UQCR11/QCR10 and a cleavage product of UQCRFS1). This cytochrome bc1 complex then forms a dimer.</text>
</comment>
<comment type="subcellular location">
    <subcellularLocation>
        <location evidence="2">Mitochondrion inner membrane</location>
        <topology evidence="2">Multi-pass membrane protein</topology>
    </subcellularLocation>
</comment>
<comment type="miscellaneous">
    <text evidence="1">Heme 1 (or BL or b562) is low-potential and absorbs at about 562 nm, and heme 2 (or BH or b566) is high-potential and absorbs at about 566 nm.</text>
</comment>
<comment type="similarity">
    <text evidence="3 4">Belongs to the cytochrome b family.</text>
</comment>
<comment type="caution">
    <text evidence="2">The full-length protein contains only eight transmembrane helices, not nine as predicted by bioinformatics tools.</text>
</comment>
<organism>
    <name type="scientific">Paragalago granti</name>
    <name type="common">Mozambique dwarf galago</name>
    <name type="synonym">Galago granti</name>
    <dbReference type="NCBI Taxonomy" id="3043104"/>
    <lineage>
        <taxon>Eukaryota</taxon>
        <taxon>Metazoa</taxon>
        <taxon>Chordata</taxon>
        <taxon>Craniata</taxon>
        <taxon>Vertebrata</taxon>
        <taxon>Euteleostomi</taxon>
        <taxon>Mammalia</taxon>
        <taxon>Eutheria</taxon>
        <taxon>Euarchontoglires</taxon>
        <taxon>Primates</taxon>
        <taxon>Strepsirrhini</taxon>
        <taxon>Lorisiformes</taxon>
        <taxon>Galagidae</taxon>
        <taxon>Paragalago</taxon>
    </lineage>
</organism>
<gene>
    <name type="primary">MT-CYB</name>
    <name type="synonym">COB</name>
    <name type="synonym">CYTB</name>
    <name type="synonym">MTCYB</name>
</gene>
<name>CYB_PARGT</name>
<protein>
    <recommendedName>
        <fullName>Cytochrome b</fullName>
    </recommendedName>
    <alternativeName>
        <fullName>Complex III subunit 3</fullName>
    </alternativeName>
    <alternativeName>
        <fullName>Complex III subunit III</fullName>
    </alternativeName>
    <alternativeName>
        <fullName>Cytochrome b-c1 complex subunit 3</fullName>
    </alternativeName>
    <alternativeName>
        <fullName>Ubiquinol-cytochrome-c reductase complex cytochrome b subunit</fullName>
    </alternativeName>
</protein>
<keyword id="KW-0249">Electron transport</keyword>
<keyword id="KW-0349">Heme</keyword>
<keyword id="KW-0408">Iron</keyword>
<keyword id="KW-0472">Membrane</keyword>
<keyword id="KW-0479">Metal-binding</keyword>
<keyword id="KW-0496">Mitochondrion</keyword>
<keyword id="KW-0999">Mitochondrion inner membrane</keyword>
<keyword id="KW-0679">Respiratory chain</keyword>
<keyword id="KW-0812">Transmembrane</keyword>
<keyword id="KW-1133">Transmembrane helix</keyword>
<keyword id="KW-0813">Transport</keyword>
<keyword id="KW-0830">Ubiquinone</keyword>
<geneLocation type="mitochondrion"/>
<feature type="chain" id="PRO_0000060987" description="Cytochrome b">
    <location>
        <begin position="1"/>
        <end position="379"/>
    </location>
</feature>
<feature type="transmembrane region" description="Helical" evidence="2">
    <location>
        <begin position="33"/>
        <end position="53"/>
    </location>
</feature>
<feature type="transmembrane region" description="Helical" evidence="2">
    <location>
        <begin position="77"/>
        <end position="98"/>
    </location>
</feature>
<feature type="transmembrane region" description="Helical" evidence="2">
    <location>
        <begin position="113"/>
        <end position="133"/>
    </location>
</feature>
<feature type="transmembrane region" description="Helical" evidence="2">
    <location>
        <begin position="178"/>
        <end position="198"/>
    </location>
</feature>
<feature type="transmembrane region" description="Helical" evidence="2">
    <location>
        <begin position="226"/>
        <end position="246"/>
    </location>
</feature>
<feature type="transmembrane region" description="Helical" evidence="2">
    <location>
        <begin position="288"/>
        <end position="308"/>
    </location>
</feature>
<feature type="transmembrane region" description="Helical" evidence="2">
    <location>
        <begin position="320"/>
        <end position="340"/>
    </location>
</feature>
<feature type="transmembrane region" description="Helical" evidence="2">
    <location>
        <begin position="347"/>
        <end position="367"/>
    </location>
</feature>
<feature type="binding site" description="axial binding residue" evidence="2">
    <location>
        <position position="83"/>
    </location>
    <ligand>
        <name>heme b</name>
        <dbReference type="ChEBI" id="CHEBI:60344"/>
        <label>b562</label>
    </ligand>
    <ligandPart>
        <name>Fe</name>
        <dbReference type="ChEBI" id="CHEBI:18248"/>
    </ligandPart>
</feature>
<feature type="binding site" description="axial binding residue" evidence="2">
    <location>
        <position position="97"/>
    </location>
    <ligand>
        <name>heme b</name>
        <dbReference type="ChEBI" id="CHEBI:60344"/>
        <label>b566</label>
    </ligand>
    <ligandPart>
        <name>Fe</name>
        <dbReference type="ChEBI" id="CHEBI:18248"/>
    </ligandPart>
</feature>
<feature type="binding site" description="axial binding residue" evidence="2">
    <location>
        <position position="182"/>
    </location>
    <ligand>
        <name>heme b</name>
        <dbReference type="ChEBI" id="CHEBI:60344"/>
        <label>b562</label>
    </ligand>
    <ligandPart>
        <name>Fe</name>
        <dbReference type="ChEBI" id="CHEBI:18248"/>
    </ligandPart>
</feature>
<feature type="binding site" description="axial binding residue" evidence="2">
    <location>
        <position position="196"/>
    </location>
    <ligand>
        <name>heme b</name>
        <dbReference type="ChEBI" id="CHEBI:60344"/>
        <label>b566</label>
    </ligand>
    <ligandPart>
        <name>Fe</name>
        <dbReference type="ChEBI" id="CHEBI:18248"/>
    </ligandPart>
</feature>
<feature type="binding site" evidence="2">
    <location>
        <position position="201"/>
    </location>
    <ligand>
        <name>a ubiquinone</name>
        <dbReference type="ChEBI" id="CHEBI:16389"/>
    </ligand>
</feature>
<proteinExistence type="inferred from homology"/>
<accession>Q5VJ45</accession>
<dbReference type="EMBL" id="AY441468">
    <property type="protein sequence ID" value="AAS00149.1"/>
    <property type="molecule type" value="Genomic_DNA"/>
</dbReference>
<dbReference type="SMR" id="Q5VJ45"/>
<dbReference type="GO" id="GO:0005743">
    <property type="term" value="C:mitochondrial inner membrane"/>
    <property type="evidence" value="ECO:0007669"/>
    <property type="project" value="UniProtKB-SubCell"/>
</dbReference>
<dbReference type="GO" id="GO:0045275">
    <property type="term" value="C:respiratory chain complex III"/>
    <property type="evidence" value="ECO:0007669"/>
    <property type="project" value="InterPro"/>
</dbReference>
<dbReference type="GO" id="GO:0046872">
    <property type="term" value="F:metal ion binding"/>
    <property type="evidence" value="ECO:0007669"/>
    <property type="project" value="UniProtKB-KW"/>
</dbReference>
<dbReference type="GO" id="GO:0008121">
    <property type="term" value="F:ubiquinol-cytochrome-c reductase activity"/>
    <property type="evidence" value="ECO:0007669"/>
    <property type="project" value="InterPro"/>
</dbReference>
<dbReference type="GO" id="GO:0006122">
    <property type="term" value="P:mitochondrial electron transport, ubiquinol to cytochrome c"/>
    <property type="evidence" value="ECO:0007669"/>
    <property type="project" value="TreeGrafter"/>
</dbReference>
<dbReference type="CDD" id="cd00290">
    <property type="entry name" value="cytochrome_b_C"/>
    <property type="match status" value="1"/>
</dbReference>
<dbReference type="CDD" id="cd00284">
    <property type="entry name" value="Cytochrome_b_N"/>
    <property type="match status" value="1"/>
</dbReference>
<dbReference type="FunFam" id="1.20.810.10:FF:000002">
    <property type="entry name" value="Cytochrome b"/>
    <property type="match status" value="1"/>
</dbReference>
<dbReference type="Gene3D" id="1.20.810.10">
    <property type="entry name" value="Cytochrome Bc1 Complex, Chain C"/>
    <property type="match status" value="1"/>
</dbReference>
<dbReference type="InterPro" id="IPR005798">
    <property type="entry name" value="Cyt_b/b6_C"/>
</dbReference>
<dbReference type="InterPro" id="IPR036150">
    <property type="entry name" value="Cyt_b/b6_C_sf"/>
</dbReference>
<dbReference type="InterPro" id="IPR005797">
    <property type="entry name" value="Cyt_b/b6_N"/>
</dbReference>
<dbReference type="InterPro" id="IPR027387">
    <property type="entry name" value="Cytb/b6-like_sf"/>
</dbReference>
<dbReference type="InterPro" id="IPR030689">
    <property type="entry name" value="Cytochrome_b"/>
</dbReference>
<dbReference type="InterPro" id="IPR048260">
    <property type="entry name" value="Cytochrome_b_C_euk/bac"/>
</dbReference>
<dbReference type="InterPro" id="IPR048259">
    <property type="entry name" value="Cytochrome_b_N_euk/bac"/>
</dbReference>
<dbReference type="InterPro" id="IPR016174">
    <property type="entry name" value="Di-haem_cyt_TM"/>
</dbReference>
<dbReference type="PANTHER" id="PTHR19271">
    <property type="entry name" value="CYTOCHROME B"/>
    <property type="match status" value="1"/>
</dbReference>
<dbReference type="PANTHER" id="PTHR19271:SF16">
    <property type="entry name" value="CYTOCHROME B"/>
    <property type="match status" value="1"/>
</dbReference>
<dbReference type="Pfam" id="PF00032">
    <property type="entry name" value="Cytochrom_B_C"/>
    <property type="match status" value="1"/>
</dbReference>
<dbReference type="Pfam" id="PF00033">
    <property type="entry name" value="Cytochrome_B"/>
    <property type="match status" value="1"/>
</dbReference>
<dbReference type="PIRSF" id="PIRSF038885">
    <property type="entry name" value="COB"/>
    <property type="match status" value="1"/>
</dbReference>
<dbReference type="SUPFAM" id="SSF81648">
    <property type="entry name" value="a domain/subunit of cytochrome bc1 complex (Ubiquinol-cytochrome c reductase)"/>
    <property type="match status" value="1"/>
</dbReference>
<dbReference type="SUPFAM" id="SSF81342">
    <property type="entry name" value="Transmembrane di-heme cytochromes"/>
    <property type="match status" value="1"/>
</dbReference>
<dbReference type="PROSITE" id="PS51003">
    <property type="entry name" value="CYTB_CTER"/>
    <property type="match status" value="1"/>
</dbReference>
<dbReference type="PROSITE" id="PS51002">
    <property type="entry name" value="CYTB_NTER"/>
    <property type="match status" value="1"/>
</dbReference>
<sequence length="379" mass="42778">MTNIRKQHPLAKMINHSFIDLPAPSNISSWWNFGSLLGLCLMIQIITGLFLAMHYTSDTTTAFSSVTHICRDVNHGWIIRYLHANGASMFFICLFMHIGRGLYYGSFTFLETWNIGVILLFTVMATAFMGYVLPWGQMSFWGATVITNLLSAIPYMGTNLVEWIWGGFSVDKATLTRFFAFHFILPFIIAALAMVHLLFLHETGSNNPSGISSDSDKIPFHPYYTIKDLLGVILLLLSLFSLVLFSPDLLGDPDNYTPANPLNTPPHIKPEWYFLFAYAILRSIPNKLGGVLALVFSILILTLIPLPHTAKQASMMFRPLSQCLYWMLVADLLILTWIGGQPVENPFIIIGQTASIIYFFIILILMPLTNLLENKLLKW</sequence>
<evidence type="ECO:0000250" key="1"/>
<evidence type="ECO:0000250" key="2">
    <source>
        <dbReference type="UniProtKB" id="P00157"/>
    </source>
</evidence>
<evidence type="ECO:0000255" key="3">
    <source>
        <dbReference type="PROSITE-ProRule" id="PRU00967"/>
    </source>
</evidence>
<evidence type="ECO:0000255" key="4">
    <source>
        <dbReference type="PROSITE-ProRule" id="PRU00968"/>
    </source>
</evidence>